<feature type="chain" id="PRO_0000299756" description="Uncharacterized protein YIL105W-A">
    <location>
        <begin position="1"/>
        <end position="46"/>
    </location>
</feature>
<dbReference type="EMBL" id="Z38125">
    <property type="status" value="NOT_ANNOTATED_CDS"/>
    <property type="molecule type" value="Genomic_DNA"/>
</dbReference>
<dbReference type="EMBL" id="AF479955">
    <property type="protein sequence ID" value="AAL79268.1"/>
    <property type="molecule type" value="Genomic_DNA"/>
</dbReference>
<dbReference type="EMBL" id="BK006942">
    <property type="protein sequence ID" value="DAA35117.1"/>
    <property type="molecule type" value="Genomic_DNA"/>
</dbReference>
<dbReference type="RefSeq" id="NP_001257679.1">
    <property type="nucleotide sequence ID" value="NM_001270750.1"/>
</dbReference>
<dbReference type="BioGRID" id="4312348">
    <property type="interactions" value="1"/>
</dbReference>
<dbReference type="FunCoup" id="Q8TGN5">
    <property type="interactions" value="2"/>
</dbReference>
<dbReference type="IntAct" id="Q8TGN5">
    <property type="interactions" value="1"/>
</dbReference>
<dbReference type="STRING" id="4932.YIL105W-A"/>
<dbReference type="PaxDb" id="4932-YIL105W-A"/>
<dbReference type="EnsemblFungi" id="YIL105W-A_mRNA">
    <property type="protein sequence ID" value="YIL105W-A"/>
    <property type="gene ID" value="YIL105W-A"/>
</dbReference>
<dbReference type="GeneID" id="13393613"/>
<dbReference type="KEGG" id="sce:YIL105W-A"/>
<dbReference type="AGR" id="SGD:S000028657"/>
<dbReference type="SGD" id="S000028657">
    <property type="gene designation" value="YIL105W-A"/>
</dbReference>
<dbReference type="VEuPathDB" id="FungiDB:YIL105W-A"/>
<dbReference type="HOGENOM" id="CLU_3191584_0_0_1"/>
<dbReference type="InParanoid" id="Q8TGN5"/>
<dbReference type="BioCyc" id="YEAST:G3O-31472-MONOMER"/>
<dbReference type="BioGRID-ORCS" id="13393613">
    <property type="hits" value="0 hits in 10 CRISPR screens"/>
</dbReference>
<dbReference type="PRO" id="PR:Q8TGN5"/>
<dbReference type="Proteomes" id="UP000002311">
    <property type="component" value="Chromosome IX"/>
</dbReference>
<organism>
    <name type="scientific">Saccharomyces cerevisiae (strain ATCC 204508 / S288c)</name>
    <name type="common">Baker's yeast</name>
    <dbReference type="NCBI Taxonomy" id="559292"/>
    <lineage>
        <taxon>Eukaryota</taxon>
        <taxon>Fungi</taxon>
        <taxon>Dikarya</taxon>
        <taxon>Ascomycota</taxon>
        <taxon>Saccharomycotina</taxon>
        <taxon>Saccharomycetes</taxon>
        <taxon>Saccharomycetales</taxon>
        <taxon>Saccharomycetaceae</taxon>
        <taxon>Saccharomyces</taxon>
    </lineage>
</organism>
<proteinExistence type="predicted"/>
<accession>Q8TGN5</accession>
<accession>I2HB63</accession>
<protein>
    <recommendedName>
        <fullName>Uncharacterized protein YIL105W-A</fullName>
    </recommendedName>
</protein>
<keyword id="KW-1185">Reference proteome</keyword>
<reference key="1">
    <citation type="journal article" date="1997" name="Nature">
        <title>The nucleotide sequence of Saccharomyces cerevisiae chromosome IX.</title>
        <authorList>
            <person name="Churcher C.M."/>
            <person name="Bowman S."/>
            <person name="Badcock K."/>
            <person name="Bankier A.T."/>
            <person name="Brown D."/>
            <person name="Chillingworth T."/>
            <person name="Connor R."/>
            <person name="Devlin K."/>
            <person name="Gentles S."/>
            <person name="Hamlin N."/>
            <person name="Harris D.E."/>
            <person name="Horsnell T."/>
            <person name="Hunt S."/>
            <person name="Jagels K."/>
            <person name="Jones M."/>
            <person name="Lye G."/>
            <person name="Moule S."/>
            <person name="Odell C."/>
            <person name="Pearson D."/>
            <person name="Rajandream M.A."/>
            <person name="Rice P."/>
            <person name="Rowley N."/>
            <person name="Skelton J."/>
            <person name="Smith V."/>
            <person name="Walsh S.V."/>
            <person name="Whitehead S."/>
            <person name="Barrell B.G."/>
        </authorList>
    </citation>
    <scope>NUCLEOTIDE SEQUENCE [LARGE SCALE GENOMIC DNA]</scope>
    <source>
        <strain>ATCC 204508 / S288c</strain>
    </source>
</reference>
<reference key="2">
    <citation type="journal article" date="2014" name="G3 (Bethesda)">
        <title>The reference genome sequence of Saccharomyces cerevisiae: Then and now.</title>
        <authorList>
            <person name="Engel S.R."/>
            <person name="Dietrich F.S."/>
            <person name="Fisk D.G."/>
            <person name="Binkley G."/>
            <person name="Balakrishnan R."/>
            <person name="Costanzo M.C."/>
            <person name="Dwight S.S."/>
            <person name="Hitz B.C."/>
            <person name="Karra K."/>
            <person name="Nash R.S."/>
            <person name="Weng S."/>
            <person name="Wong E.D."/>
            <person name="Lloyd P."/>
            <person name="Skrzypek M.S."/>
            <person name="Miyasato S.R."/>
            <person name="Simison M."/>
            <person name="Cherry J.M."/>
        </authorList>
    </citation>
    <scope>GENOME REANNOTATION</scope>
    <source>
        <strain>ATCC 204508 / S288c</strain>
    </source>
</reference>
<reference key="3">
    <citation type="journal article" date="2002" name="Nat. Biotechnol.">
        <title>An integrated approach for finding overlooked genes in yeast.</title>
        <authorList>
            <person name="Kumar A."/>
            <person name="Harrison P.M."/>
            <person name="Cheung K.-H."/>
            <person name="Lan N."/>
            <person name="Echols N."/>
            <person name="Bertone P."/>
            <person name="Miller P."/>
            <person name="Gerstein M.B."/>
            <person name="Snyder M."/>
        </authorList>
    </citation>
    <scope>NUCLEOTIDE SEQUENCE [GENOMIC DNA]</scope>
</reference>
<reference key="4">
    <citation type="journal article" date="2012" name="Science">
        <title>High-resolution view of the yeast meiotic program revealed by ribosome profiling.</title>
        <authorList>
            <person name="Brar G.A."/>
            <person name="Yassour M."/>
            <person name="Friedman N."/>
            <person name="Regev A."/>
            <person name="Ingolia N.T."/>
            <person name="Weissman J.S."/>
        </authorList>
    </citation>
    <scope>IDENTIFICATION</scope>
</reference>
<gene>
    <name type="ordered locus">YIL105W-A</name>
</gene>
<sequence length="46" mass="5935">MKTWMYSYLFDCPILVLPWTPHNYYLYHRFHHFLPLCYWHYSADTY</sequence>
<name>YI105_YEAST</name>